<keyword id="KW-1003">Cell membrane</keyword>
<keyword id="KW-0472">Membrane</keyword>
<keyword id="KW-1185">Reference proteome</keyword>
<keyword id="KW-0812">Transmembrane</keyword>
<keyword id="KW-1133">Transmembrane helix</keyword>
<dbReference type="EMBL" id="L77117">
    <property type="protein sequence ID" value="AAB99504.1"/>
    <property type="molecule type" value="Genomic_DNA"/>
</dbReference>
<dbReference type="PIR" id="C64486">
    <property type="entry name" value="C64486"/>
</dbReference>
<dbReference type="RefSeq" id="WP_010871015.1">
    <property type="nucleotide sequence ID" value="NC_000909.1"/>
</dbReference>
<dbReference type="STRING" id="243232.MJ_1492"/>
<dbReference type="PaxDb" id="243232-MJ_1492"/>
<dbReference type="EnsemblBacteria" id="AAB99504">
    <property type="protein sequence ID" value="AAB99504"/>
    <property type="gene ID" value="MJ_1492"/>
</dbReference>
<dbReference type="GeneID" id="1452399"/>
<dbReference type="KEGG" id="mja:MJ_1492"/>
<dbReference type="eggNOG" id="arCOG03949">
    <property type="taxonomic scope" value="Archaea"/>
</dbReference>
<dbReference type="HOGENOM" id="CLU_104519_0_0_2"/>
<dbReference type="InParanoid" id="Q58887"/>
<dbReference type="OrthoDB" id="65798at2157"/>
<dbReference type="Proteomes" id="UP000000805">
    <property type="component" value="Chromosome"/>
</dbReference>
<dbReference type="GO" id="GO:0005886">
    <property type="term" value="C:plasma membrane"/>
    <property type="evidence" value="ECO:0007669"/>
    <property type="project" value="UniProtKB-SubCell"/>
</dbReference>
<dbReference type="InterPro" id="IPR019206">
    <property type="entry name" value="DUF2085_TM"/>
</dbReference>
<dbReference type="Pfam" id="PF09858">
    <property type="entry name" value="DUF2085"/>
    <property type="match status" value="1"/>
</dbReference>
<feature type="chain" id="PRO_0000107375" description="Uncharacterized protein MJ1492">
    <location>
        <begin position="1"/>
        <end position="156"/>
    </location>
</feature>
<feature type="transmembrane region" description="Helical" evidence="1">
    <location>
        <begin position="6"/>
        <end position="26"/>
    </location>
</feature>
<feature type="transmembrane region" description="Helical" evidence="1">
    <location>
        <begin position="34"/>
        <end position="54"/>
    </location>
</feature>
<feature type="transmembrane region" description="Helical" evidence="1">
    <location>
        <begin position="68"/>
        <end position="88"/>
    </location>
</feature>
<feature type="transmembrane region" description="Helical" evidence="1">
    <location>
        <begin position="100"/>
        <end position="120"/>
    </location>
</feature>
<feature type="transmembrane region" description="Helical" evidence="1">
    <location>
        <begin position="129"/>
        <end position="149"/>
    </location>
</feature>
<proteinExistence type="predicted"/>
<accession>Q58887</accession>
<gene>
    <name type="ordered locus">MJ1492</name>
</gene>
<evidence type="ECO:0000255" key="1"/>
<evidence type="ECO:0000305" key="2"/>
<name>Y1492_METJA</name>
<organism>
    <name type="scientific">Methanocaldococcus jannaschii (strain ATCC 43067 / DSM 2661 / JAL-1 / JCM 10045 / NBRC 100440)</name>
    <name type="common">Methanococcus jannaschii</name>
    <dbReference type="NCBI Taxonomy" id="243232"/>
    <lineage>
        <taxon>Archaea</taxon>
        <taxon>Methanobacteriati</taxon>
        <taxon>Methanobacteriota</taxon>
        <taxon>Methanomada group</taxon>
        <taxon>Methanococci</taxon>
        <taxon>Methanococcales</taxon>
        <taxon>Methanocaldococcaceae</taxon>
        <taxon>Methanocaldococcus</taxon>
    </lineage>
</organism>
<reference key="1">
    <citation type="journal article" date="1996" name="Science">
        <title>Complete genome sequence of the methanogenic archaeon, Methanococcus jannaschii.</title>
        <authorList>
            <person name="Bult C.J."/>
            <person name="White O."/>
            <person name="Olsen G.J."/>
            <person name="Zhou L."/>
            <person name="Fleischmann R.D."/>
            <person name="Sutton G.G."/>
            <person name="Blake J.A."/>
            <person name="FitzGerald L.M."/>
            <person name="Clayton R.A."/>
            <person name="Gocayne J.D."/>
            <person name="Kerlavage A.R."/>
            <person name="Dougherty B.A."/>
            <person name="Tomb J.-F."/>
            <person name="Adams M.D."/>
            <person name="Reich C.I."/>
            <person name="Overbeek R."/>
            <person name="Kirkness E.F."/>
            <person name="Weinstock K.G."/>
            <person name="Merrick J.M."/>
            <person name="Glodek A."/>
            <person name="Scott J.L."/>
            <person name="Geoghagen N.S.M."/>
            <person name="Weidman J.F."/>
            <person name="Fuhrmann J.L."/>
            <person name="Nguyen D."/>
            <person name="Utterback T.R."/>
            <person name="Kelley J.M."/>
            <person name="Peterson J.D."/>
            <person name="Sadow P.W."/>
            <person name="Hanna M.C."/>
            <person name="Cotton M.D."/>
            <person name="Roberts K.M."/>
            <person name="Hurst M.A."/>
            <person name="Kaine B.P."/>
            <person name="Borodovsky M."/>
            <person name="Klenk H.-P."/>
            <person name="Fraser C.M."/>
            <person name="Smith H.O."/>
            <person name="Woese C.R."/>
            <person name="Venter J.C."/>
        </authorList>
    </citation>
    <scope>NUCLEOTIDE SEQUENCE [LARGE SCALE GENOMIC DNA]</scope>
    <source>
        <strain>ATCC 43067 / DSM 2661 / JAL-1 / JCM 10045 / NBRC 100440</strain>
    </source>
</reference>
<protein>
    <recommendedName>
        <fullName>Uncharacterized protein MJ1492</fullName>
    </recommendedName>
</protein>
<sequence>MKKYYLIVLISFLIFYLSIFLAPYFAYLGETSNFWKFISICLYAVYSLICHQMPQRSFFIFGHKMAVCARCFGIYTGVLVGMIIYPFIKKLDDFKIPNKWYLIIALIPMAVDGTTQLIGLRESFNELRFITGFIAGFTVVFYILPIFFEMIYKKFK</sequence>
<comment type="subcellular location">
    <subcellularLocation>
        <location evidence="2">Cell membrane</location>
        <topology evidence="2">Multi-pass membrane protein</topology>
    </subcellularLocation>
</comment>